<comment type="function">
    <molecule>Non-structural polyprotein p200</molecule>
    <text evidence="2">Probable principal replicase for the negative-strand DNA, which replicates the 40S (+) genomic RNA into (-) antigenomic RNA. It cannot replicate the (-) into (+) until cleaved into p150 and p90 mature proteins.</text>
</comment>
<comment type="function">
    <molecule>Protease/methyltransferase p150</molecule>
    <text evidence="2">Protease that cleaves the precursor polyprotein into two mature products. Together with RNA-directed RNA polymerase p90, replicates the 40S genomic and antigenomic RNA by recognizing replications specific signals. The heterodimer P150/p90 is probably the principal replicase for positive-strand genomic RNA and the 24S subgenomic RNA, which codes for structural proteins. Responsible for the mRNA-capping of the viral mRNAs. This function is necessary since all viral RNAs are synthesized in the cytoplasm, and host capping enzymes are restricted to the nucleus. Forms fibers late in the infection that may be involved in cell-to-cell spread of the virus RNA in the absence of virus particle formation.</text>
</comment>
<comment type="function">
    <molecule>RNA-directed RNA polymerase p90</molecule>
    <text evidence="2">Together with protease/methyltransferase p150, replicates the 40S genomic and antigenomic RNA by recognizing replications specific signals. The heterodimer P150/p90 is probably the principal replicase for positive-strand genomic RNA and the 24S subgenomic RNA, which codes for structural proteins. A helicase activity is probably also present.</text>
</comment>
<comment type="catalytic activity">
    <reaction evidence="2 4">
        <text>RNA(n) + a ribonucleoside 5'-triphosphate = RNA(n+1) + diphosphate</text>
        <dbReference type="Rhea" id="RHEA:21248"/>
        <dbReference type="Rhea" id="RHEA-COMP:14527"/>
        <dbReference type="Rhea" id="RHEA-COMP:17342"/>
        <dbReference type="ChEBI" id="CHEBI:33019"/>
        <dbReference type="ChEBI" id="CHEBI:61557"/>
        <dbReference type="ChEBI" id="CHEBI:140395"/>
        <dbReference type="EC" id="2.7.7.48"/>
    </reaction>
</comment>
<comment type="catalytic activity">
    <reaction evidence="2">
        <text>a ribonucleoside 5'-triphosphate + H2O = a ribonucleoside 5'-diphosphate + phosphate + H(+)</text>
        <dbReference type="Rhea" id="RHEA:23680"/>
        <dbReference type="ChEBI" id="CHEBI:15377"/>
        <dbReference type="ChEBI" id="CHEBI:15378"/>
        <dbReference type="ChEBI" id="CHEBI:43474"/>
        <dbReference type="ChEBI" id="CHEBI:57930"/>
        <dbReference type="ChEBI" id="CHEBI:61557"/>
        <dbReference type="EC" id="3.6.1.15"/>
    </reaction>
</comment>
<comment type="catalytic activity">
    <reaction evidence="2">
        <text>ATP + H2O = ADP + phosphate + H(+)</text>
        <dbReference type="Rhea" id="RHEA:13065"/>
        <dbReference type="ChEBI" id="CHEBI:15377"/>
        <dbReference type="ChEBI" id="CHEBI:15378"/>
        <dbReference type="ChEBI" id="CHEBI:30616"/>
        <dbReference type="ChEBI" id="CHEBI:43474"/>
        <dbReference type="ChEBI" id="CHEBI:456216"/>
        <dbReference type="EC" id="3.6.4.13"/>
    </reaction>
</comment>
<comment type="cofactor">
    <cofactor evidence="7">
        <name>Zn(2+)</name>
        <dbReference type="ChEBI" id="CHEBI:29105"/>
    </cofactor>
    <text evidence="7">Zn(2+) is necessary for the protease activity. The protease can also function efficiently with Cd(2+) and Co(2+).</text>
</comment>
<comment type="subunit">
    <molecule>Protease/methyltransferase p150</molecule>
    <text evidence="2">Interacts with RNA-directed RNA polymerase p90. Interacts with host CALM1; this interaction is necessary for the protease activity and viral infectivity. Interacts with host C1QBP. Interacts with the capsid protein.</text>
</comment>
<comment type="subunit">
    <molecule>RNA-directed RNA polymerase p90</molecule>
    <text evidence="2">Interacts with human RB1/retinoblastoma protein. Interacts with protease/methyltransferase p150.</text>
</comment>
<comment type="subcellular location">
    <molecule>Non-structural polyprotein p200</molecule>
    <subcellularLocation>
        <location evidence="2">Host membrane</location>
    </subcellularLocation>
    <subcellularLocation>
        <location evidence="2">Host cytoplasm</location>
        <location evidence="2">Host perinuclear region</location>
    </subcellularLocation>
    <subcellularLocation>
        <location evidence="2">Host cytoplasm</location>
    </subcellularLocation>
    <text evidence="2">Localizes to cytoplasmic foci at 24 hpi.</text>
</comment>
<comment type="subcellular location">
    <molecule>Protease/methyltransferase p150</molecule>
    <subcellularLocation>
        <location evidence="2">Host membrane</location>
    </subcellularLocation>
    <subcellularLocation>
        <location evidence="2">Host cytoplasm</location>
        <location evidence="2">Host perinuclear region</location>
    </subcellularLocation>
    <subcellularLocation>
        <location evidence="2">Host cytoplasm</location>
    </subcellularLocation>
    <text evidence="1 2">At 36 hpi, localizes to the host cytoplasm, probably in vesicles inside host vacuoles of endosomal and lysosomal origin (By similarity). At 72 hpi, localizes to filamentous structures in the host cytoplasm (By similarity).</text>
</comment>
<comment type="subcellular location">
    <molecule>RNA-directed RNA polymerase p90</molecule>
    <subcellularLocation>
        <location evidence="2">Host membrane</location>
    </subcellularLocation>
    <subcellularLocation>
        <location evidence="2">Host cytoplasm</location>
    </subcellularLocation>
    <text evidence="2">Localizes to the cytoplasm and to the cytoplasmic fibers formed by protease/methyltransferase p150.</text>
</comment>
<comment type="domain">
    <molecule>Protease/methyltransferase p150</molecule>
    <text evidence="2">The N-terminus has a methyltransferase activity for mRNA-capping. The C-terminus harbors a protease active in cis or in trans which specifically cleaves and releases the two mature proteins. Both the N-terminus and C-terminus are required for fiber formation. The N-terminus is involved in associating with membranes. An EF-hand Ca(2+)-binding motif is present in the protease. Also contains 3 SH3-binding motifs that are responsible for the interaction with host C1QBP.</text>
</comment>
<comment type="PTM">
    <molecule>Non-structural polyprotein p200</molecule>
    <text evidence="2">Specific enzymatic cleavage by its own cysteine protease yield mature proteins p150 and p90.</text>
</comment>
<comment type="miscellaneous">
    <text evidence="2">Rubella virus in utero infection has frequently severe consequences on normal fetal development, collectively known as congenital rubella syndrome (CRS). The teratogenicity of the virus is possibly due to the interaction between the p90 protein and the human RB1/retinoblastoma protein.</text>
</comment>
<sequence>MEKLLDEVLAPGGPYNLTVGSWVRDHVRSIVEGAWEVRDVVTAAQKRAIVAVIPRPVFTQMQVSDHPALHAISRYTRRHWIEWGPKEALHVLIDPSPGLLREVARVERRWVALCLHRTARKLATALAETASEAWHADYVCALRGAPSGPFYVHPEDVPHGGRAVADRCLLYYTPMQMCELMRTIDATLLVAVDLWPVALAAHVGDDWDDLGIAWHLDHDGGCPADCRGAGAGPTPGYTRPCTTRIYQVLPDTAHPGRLYRCGPRLWTRDCAVAELSWEVAQHCGHQARVRAVRCTLPIRHVRSLQPSARVRLPDLVHLAEVGRWRWFSLPRPVFQRMLSYCKTLSPDAYYSERVFKFKNALSHSITLAGNVLQEGWKGTCAEEDALCAYVAFRAWQSNARLAGIMKSAKRCAADSLSVAGWLDTIWDAIKRFFGSVPLAERMEEWEQDAAVAAFDRGPLEDGGRHLDTVQPPKSPPRPEIAATWIVHAASADRHCACAPRRDAPRERPSAPAGPPDDEALIPPWLFAERRALRCREWDFEALRARADTAAAPAPLAPRPARCPTVLYRHPAHYGPWLTLDEPGEADAALVLCDPLGQPLRGPERHFAAGAHMCAQARGLQAFVRVVPPPERPWADGGARAWAKFFRGCAWAQRLLGEPAVMHLPYTDGDVPQLIALALRTLAQQGAALALSVRDLPGGAAFDANAVTAAVRAGPGQSAATSPPPGDPPPPRRARRSQRHLDARGTPPPAPARDPPPPAPSPPAPPRAGDPVLPTSAGPADRARHAELEVAYEPSDPPTPTKADPDSDIVESYARAAGPVHLRVRDIMDPPPGCKVVVNAANEGLLAGSGVCGAIFANATAALAADCRRLAPCPTGEAVATPGHGCGYTHIIHAVAPRRPRDPAALEEGEALLERAYRSIVALAAARRWACVACPLLGAGVYGWSAAESLRAALAATRAEPAERVSLHICHPDRATLTHASVLVGAGLAARRVSPPPTEPLASCPAGDPGRPAQRSASPPATPLGDATAPEPRGCQGCELCRYTRVTNDRAYVNLWLERDRGATSWAMRIPEVVVYGPEHLATHFPLNHYSVLKPAEVRPPRGMCGSDMWRCRGWQGMPQVRCTPSNAHAALCRTGVPPRVSTRGGELDPNTCWLRAAASVAQAARACGAYTSAGCPKCAYGRALSEARTHEDFAALSQRWSASHADASPDGTGDPLDPLMETVGCACSRVWVGSEHEAPPDHLLVSLHRAPNGPWGVVLEVRARPEGGNPTGHFVCAVGGGPRRVSDRPHLWLAVPLSRGGGTCAATDEGLAQAYYDDLEVRRLGDDAMARAALASVQRPRKGPYNIRVWDMAAGAGKTTRILAAFTREDLYVCPTNALLHEIQAKLRARDIDIKNAATYERALTKPLAAYRRIYIDEAFTLGGEYCAFVASQTTAEVICVGDRDQCGPHYANNCRTPVPDRWPTERSRHTWRFPDCWAARLRAGLDYDIEGERTGTFACNLWDGRQVDLHLAFSRETVRRLHEAGIRAYTVREAQGMSVGTACIHVGRDGTDVALALTRDLAIVSLTRASDALYLHELEDGSLRAAGLSAFLDAGALAELKEVPAGIDRVVAVEQAPPPLPPADGIPEAQDVPPFCPRTLEELVFGRAGHPHYADLNRVTEGEREVRYMRISRHLLNKNHTEMPGTERVLSAVCAVRRYRAGEDGSTLRTAVARQHPRPFRQIPPPRVTAGVAQEWRMTYLRERIDLTDVYTQMGVAARELTDRYARRYPEIFAGMCTAQSLSVPAFLKATLKCVDAALGPRDTEDCHAAQGKAGLEIRAWAKEWVQVMSPHFRAIQKIIMRALRPQFLVAAGHTEPEVDAWWQAHYTTNAIEVDFTEFDMNQTLATRDVELEISAALLGLPCAEDYRALRAGSYCTLRELGSTETGCERTSGEPATLLHNTTVAMCMAMRMVPKGVRWAGIFQGDDMVIFLPEGARSAALKWTPAEVGLFGFHIPVKHVSTPTPSFCGHVGTAAGLFHDVMHQAIKVLCRRFDPDVLEEQQVALLDRLRGVYAALPDTVAANAAYYDYSAERVLAIVRELTAYARGRGLDHPATIGALEEIQTPYARANLHDAD</sequence>
<dbReference type="EC" id="3.4.22.-"/>
<dbReference type="EC" id="2.7.7.48" evidence="4"/>
<dbReference type="EC" id="3.6.1.15"/>
<dbReference type="EC" id="3.6.4.13"/>
<dbReference type="EMBL" id="AB047329">
    <property type="protein sequence ID" value="BAB32471.1"/>
    <property type="molecule type" value="Genomic_RNA"/>
</dbReference>
<dbReference type="SMR" id="Q99IE7"/>
<dbReference type="IntAct" id="Q99IE7">
    <property type="interactions" value="1"/>
</dbReference>
<dbReference type="MEROPS" id="C27.001"/>
<dbReference type="Proteomes" id="UP000007187">
    <property type="component" value="Genome"/>
</dbReference>
<dbReference type="GO" id="GO:0033644">
    <property type="term" value="C:host cell membrane"/>
    <property type="evidence" value="ECO:0007669"/>
    <property type="project" value="UniProtKB-SubCell"/>
</dbReference>
<dbReference type="GO" id="GO:0044220">
    <property type="term" value="C:host cell perinuclear region of cytoplasm"/>
    <property type="evidence" value="ECO:0007669"/>
    <property type="project" value="UniProtKB-SubCell"/>
</dbReference>
<dbReference type="GO" id="GO:0016020">
    <property type="term" value="C:membrane"/>
    <property type="evidence" value="ECO:0007669"/>
    <property type="project" value="UniProtKB-KW"/>
</dbReference>
<dbReference type="GO" id="GO:0005524">
    <property type="term" value="F:ATP binding"/>
    <property type="evidence" value="ECO:0007669"/>
    <property type="project" value="UniProtKB-KW"/>
</dbReference>
<dbReference type="GO" id="GO:0016887">
    <property type="term" value="F:ATP hydrolysis activity"/>
    <property type="evidence" value="ECO:0007669"/>
    <property type="project" value="RHEA"/>
</dbReference>
<dbReference type="GO" id="GO:0004197">
    <property type="term" value="F:cysteine-type endopeptidase activity"/>
    <property type="evidence" value="ECO:0007669"/>
    <property type="project" value="InterPro"/>
</dbReference>
<dbReference type="GO" id="GO:0046872">
    <property type="term" value="F:metal ion binding"/>
    <property type="evidence" value="ECO:0007669"/>
    <property type="project" value="UniProtKB-KW"/>
</dbReference>
<dbReference type="GO" id="GO:0008174">
    <property type="term" value="F:mRNA methyltransferase activity"/>
    <property type="evidence" value="ECO:0007669"/>
    <property type="project" value="InterPro"/>
</dbReference>
<dbReference type="GO" id="GO:0003723">
    <property type="term" value="F:RNA binding"/>
    <property type="evidence" value="ECO:0007669"/>
    <property type="project" value="InterPro"/>
</dbReference>
<dbReference type="GO" id="GO:0003724">
    <property type="term" value="F:RNA helicase activity"/>
    <property type="evidence" value="ECO:0007669"/>
    <property type="project" value="UniProtKB-EC"/>
</dbReference>
<dbReference type="GO" id="GO:0003968">
    <property type="term" value="F:RNA-directed RNA polymerase activity"/>
    <property type="evidence" value="ECO:0007669"/>
    <property type="project" value="UniProtKB-KW"/>
</dbReference>
<dbReference type="GO" id="GO:0006351">
    <property type="term" value="P:DNA-templated transcription"/>
    <property type="evidence" value="ECO:0007669"/>
    <property type="project" value="InterPro"/>
</dbReference>
<dbReference type="GO" id="GO:0016556">
    <property type="term" value="P:mRNA modification"/>
    <property type="evidence" value="ECO:0007669"/>
    <property type="project" value="InterPro"/>
</dbReference>
<dbReference type="GO" id="GO:0006508">
    <property type="term" value="P:proteolysis"/>
    <property type="evidence" value="ECO:0007669"/>
    <property type="project" value="UniProtKB-KW"/>
</dbReference>
<dbReference type="GO" id="GO:0006396">
    <property type="term" value="P:RNA processing"/>
    <property type="evidence" value="ECO:0007669"/>
    <property type="project" value="InterPro"/>
</dbReference>
<dbReference type="GO" id="GO:0039694">
    <property type="term" value="P:viral RNA genome replication"/>
    <property type="evidence" value="ECO:0007669"/>
    <property type="project" value="InterPro"/>
</dbReference>
<dbReference type="CDD" id="cd21557">
    <property type="entry name" value="Macro_X_Nsp3-like"/>
    <property type="match status" value="1"/>
</dbReference>
<dbReference type="CDD" id="cd23260">
    <property type="entry name" value="Matonaviridae_RdRp"/>
    <property type="match status" value="1"/>
</dbReference>
<dbReference type="Gene3D" id="3.40.220.10">
    <property type="entry name" value="Leucine Aminopeptidase, subunit E, domain 1"/>
    <property type="match status" value="1"/>
</dbReference>
<dbReference type="Gene3D" id="3.40.50.300">
    <property type="entry name" value="P-loop containing nucleotide triphosphate hydrolases"/>
    <property type="match status" value="1"/>
</dbReference>
<dbReference type="InterPro" id="IPR027351">
    <property type="entry name" value="(+)RNA_virus_helicase_core_dom"/>
</dbReference>
<dbReference type="InterPro" id="IPR002588">
    <property type="entry name" value="Alphavirus-like_MT_dom"/>
</dbReference>
<dbReference type="InterPro" id="IPR043502">
    <property type="entry name" value="DNA/RNA_pol_sf"/>
</dbReference>
<dbReference type="InterPro" id="IPR002589">
    <property type="entry name" value="Macro_dom"/>
</dbReference>
<dbReference type="InterPro" id="IPR043472">
    <property type="entry name" value="Macro_dom-like"/>
</dbReference>
<dbReference type="InterPro" id="IPR044371">
    <property type="entry name" value="Macro_X_NSP3-like"/>
</dbReference>
<dbReference type="InterPro" id="IPR047306">
    <property type="entry name" value="Matonaviridae_RdRp"/>
</dbReference>
<dbReference type="InterPro" id="IPR027417">
    <property type="entry name" value="P-loop_NTPase"/>
</dbReference>
<dbReference type="InterPro" id="IPR008738">
    <property type="entry name" value="Peptidase_C27"/>
</dbReference>
<dbReference type="InterPro" id="IPR001788">
    <property type="entry name" value="RNA-dep_RNA_pol_alsuvir"/>
</dbReference>
<dbReference type="InterPro" id="IPR007094">
    <property type="entry name" value="RNA-dir_pol_PSvirus"/>
</dbReference>
<dbReference type="InterPro" id="IPR022245">
    <property type="entry name" value="Rubi_NSP_C"/>
</dbReference>
<dbReference type="InterPro" id="IPR044070">
    <property type="entry name" value="RUBV_NS_PRO"/>
</dbReference>
<dbReference type="PANTHER" id="PTHR11106">
    <property type="entry name" value="GANGLIOSIDE INDUCED DIFFERENTIATION ASSOCIATED PROTEIN 2-RELATED"/>
    <property type="match status" value="1"/>
</dbReference>
<dbReference type="PANTHER" id="PTHR11106:SF27">
    <property type="entry name" value="MACRO DOMAIN-CONTAINING PROTEIN"/>
    <property type="match status" value="1"/>
</dbReference>
<dbReference type="Pfam" id="PF01661">
    <property type="entry name" value="Macro"/>
    <property type="match status" value="1"/>
</dbReference>
<dbReference type="Pfam" id="PF05407">
    <property type="entry name" value="Peptidase_C27"/>
    <property type="match status" value="1"/>
</dbReference>
<dbReference type="Pfam" id="PF00978">
    <property type="entry name" value="RdRP_2"/>
    <property type="match status" value="1"/>
</dbReference>
<dbReference type="Pfam" id="PF12601">
    <property type="entry name" value="Rubi_NSP_C"/>
    <property type="match status" value="1"/>
</dbReference>
<dbReference type="Pfam" id="PF01443">
    <property type="entry name" value="Viral_helicase1"/>
    <property type="match status" value="1"/>
</dbReference>
<dbReference type="SMART" id="SM00506">
    <property type="entry name" value="A1pp"/>
    <property type="match status" value="1"/>
</dbReference>
<dbReference type="SUPFAM" id="SSF56672">
    <property type="entry name" value="DNA/RNA polymerases"/>
    <property type="match status" value="1"/>
</dbReference>
<dbReference type="SUPFAM" id="SSF52949">
    <property type="entry name" value="Macro domain-like"/>
    <property type="match status" value="1"/>
</dbReference>
<dbReference type="SUPFAM" id="SSF52540">
    <property type="entry name" value="P-loop containing nucleoside triphosphate hydrolases"/>
    <property type="match status" value="1"/>
</dbReference>
<dbReference type="PROSITE" id="PS51743">
    <property type="entry name" value="ALPHAVIRUS_MT"/>
    <property type="match status" value="1"/>
</dbReference>
<dbReference type="PROSITE" id="PS51154">
    <property type="entry name" value="MACRO"/>
    <property type="match status" value="1"/>
</dbReference>
<dbReference type="PROSITE" id="PS51657">
    <property type="entry name" value="PSRV_HELICASE"/>
    <property type="match status" value="1"/>
</dbReference>
<dbReference type="PROSITE" id="PS50507">
    <property type="entry name" value="RDRP_SSRNA_POS"/>
    <property type="match status" value="1"/>
</dbReference>
<dbReference type="PROSITE" id="PS51889">
    <property type="entry name" value="RUBV_NS_PRO"/>
    <property type="match status" value="1"/>
</dbReference>
<organismHost>
    <name type="scientific">Homo sapiens</name>
    <name type="common">Human</name>
    <dbReference type="NCBI Taxonomy" id="9606"/>
</organismHost>
<organism>
    <name type="scientific">Rubella virus (strain TO-336 vaccine)</name>
    <name type="common">RUBV</name>
    <dbReference type="NCBI Taxonomy" id="376265"/>
    <lineage>
        <taxon>Viruses</taxon>
        <taxon>Riboviria</taxon>
        <taxon>Orthornavirae</taxon>
        <taxon>Kitrinoviricota</taxon>
        <taxon>Alsuviricetes</taxon>
        <taxon>Hepelivirales</taxon>
        <taxon>Matonaviridae</taxon>
        <taxon>Rubivirus</taxon>
        <taxon>Rubivirus rubellae</taxon>
    </lineage>
</organism>
<accession>Q99IE7</accession>
<feature type="chain" id="PRO_0000240173" description="Non-structural polyprotein p200">
    <location>
        <begin position="1"/>
        <end position="2116"/>
    </location>
</feature>
<feature type="chain" id="PRO_0000240174" description="Protease/methyltransferase p150">
    <location>
        <begin position="1"/>
        <end position="1301"/>
    </location>
</feature>
<feature type="chain" id="PRO_0000240175" description="RNA-directed RNA polymerase p90">
    <location>
        <begin position="1302"/>
        <end position="2116"/>
    </location>
</feature>
<feature type="domain" description="Alphavirus-like MT" evidence="6">
    <location>
        <begin position="57"/>
        <end position="247"/>
    </location>
</feature>
<feature type="domain" description="Macro" evidence="3">
    <location>
        <begin position="806"/>
        <end position="985"/>
    </location>
</feature>
<feature type="domain" description="Peptidase C27" evidence="7">
    <location>
        <begin position="1000"/>
        <end position="1301"/>
    </location>
</feature>
<feature type="domain" description="(+)RNA virus helicase ATP-binding" evidence="5">
    <location>
        <begin position="1320"/>
        <end position="1468"/>
    </location>
</feature>
<feature type="domain" description="(+)RNA virus helicase C-terminal" evidence="5">
    <location>
        <begin position="1469"/>
        <end position="1609"/>
    </location>
</feature>
<feature type="domain" description="RdRp catalytic" evidence="4">
    <location>
        <begin position="1870"/>
        <end position="1981"/>
    </location>
</feature>
<feature type="region of interest" description="Required for efficient proteolysis and P150-P90 interaction" evidence="2">
    <location>
        <begin position="36"/>
        <end position="49"/>
    </location>
</feature>
<feature type="region of interest" description="Disordered" evidence="8">
    <location>
        <begin position="457"/>
        <end position="477"/>
    </location>
</feature>
<feature type="region of interest" description="Disordered" evidence="8">
    <location>
        <begin position="497"/>
        <end position="519"/>
    </location>
</feature>
<feature type="region of interest" description="Disordered" evidence="8">
    <location>
        <begin position="712"/>
        <end position="780"/>
    </location>
</feature>
<feature type="region of interest" description="Disordered" evidence="8">
    <location>
        <begin position="992"/>
        <end position="1031"/>
    </location>
</feature>
<feature type="region of interest" description="Interaction with host CALM1" evidence="7">
    <location>
        <begin position="1152"/>
        <end position="1183"/>
    </location>
</feature>
<feature type="region of interest" description="EF-hand-like" evidence="7">
    <location>
        <begin position="1193"/>
        <end position="1228"/>
    </location>
</feature>
<feature type="region of interest" description="Involved in P150-P90 interaction" evidence="2">
    <location>
        <begin position="1700"/>
        <end position="1900"/>
    </location>
</feature>
<feature type="short sequence motif" description="PxxPxR; class II SH3-binding" evidence="2">
    <location>
        <begin position="727"/>
        <end position="732"/>
    </location>
</feature>
<feature type="short sequence motif" description="PxxPxR; class II SH3-binding" evidence="2">
    <location>
        <begin position="747"/>
        <end position="752"/>
    </location>
</feature>
<feature type="short sequence motif" description="PxxPxR; class II SH3-binding" evidence="2">
    <location>
        <begin position="761"/>
        <end position="766"/>
    </location>
</feature>
<feature type="short sequence motif" description="Human RB1 binding" evidence="2">
    <location>
        <begin position="1902"/>
        <end position="1906"/>
    </location>
</feature>
<feature type="compositionally biased region" description="Basic and acidic residues" evidence="8">
    <location>
        <begin position="457"/>
        <end position="467"/>
    </location>
</feature>
<feature type="compositionally biased region" description="Basic and acidic residues" evidence="8">
    <location>
        <begin position="497"/>
        <end position="508"/>
    </location>
</feature>
<feature type="compositionally biased region" description="Pro residues" evidence="8">
    <location>
        <begin position="721"/>
        <end position="730"/>
    </location>
</feature>
<feature type="compositionally biased region" description="Pro residues" evidence="8">
    <location>
        <begin position="745"/>
        <end position="767"/>
    </location>
</feature>
<feature type="active site" description="For cysteine protease activity" evidence="7">
    <location>
        <position position="1152"/>
    </location>
</feature>
<feature type="active site" description="For cysteine protease activity" evidence="7">
    <location>
        <position position="1273"/>
    </location>
</feature>
<feature type="binding site" evidence="7">
    <location>
        <position position="1175"/>
    </location>
    <ligand>
        <name>Zn(2+)</name>
        <dbReference type="ChEBI" id="CHEBI:29105"/>
    </ligand>
</feature>
<feature type="binding site" evidence="7">
    <location>
        <position position="1178"/>
    </location>
    <ligand>
        <name>Zn(2+)</name>
        <dbReference type="ChEBI" id="CHEBI:29105"/>
    </ligand>
</feature>
<feature type="binding site" evidence="7">
    <location>
        <position position="1227"/>
    </location>
    <ligand>
        <name>Zn(2+)</name>
        <dbReference type="ChEBI" id="CHEBI:29105"/>
    </ligand>
</feature>
<feature type="binding site" evidence="7">
    <location>
        <position position="1273"/>
    </location>
    <ligand>
        <name>Zn(2+)</name>
        <dbReference type="ChEBI" id="CHEBI:29105"/>
    </ligand>
</feature>
<feature type="binding site" evidence="5">
    <location>
        <begin position="1352"/>
        <end position="1359"/>
    </location>
    <ligand>
        <name>a ribonucleoside 5'-triphosphate</name>
        <dbReference type="ChEBI" id="CHEBI:61557"/>
    </ligand>
</feature>
<feature type="site" description="Cleavage; autocatalytic" evidence="7">
    <location>
        <begin position="1301"/>
        <end position="1302"/>
    </location>
</feature>
<evidence type="ECO:0000250" key="1">
    <source>
        <dbReference type="UniProtKB" id="P13889"/>
    </source>
</evidence>
<evidence type="ECO:0000250" key="2">
    <source>
        <dbReference type="UniProtKB" id="Q86500"/>
    </source>
</evidence>
<evidence type="ECO:0000255" key="3">
    <source>
        <dbReference type="PROSITE-ProRule" id="PRU00490"/>
    </source>
</evidence>
<evidence type="ECO:0000255" key="4">
    <source>
        <dbReference type="PROSITE-ProRule" id="PRU00539"/>
    </source>
</evidence>
<evidence type="ECO:0000255" key="5">
    <source>
        <dbReference type="PROSITE-ProRule" id="PRU00990"/>
    </source>
</evidence>
<evidence type="ECO:0000255" key="6">
    <source>
        <dbReference type="PROSITE-ProRule" id="PRU01079"/>
    </source>
</evidence>
<evidence type="ECO:0000255" key="7">
    <source>
        <dbReference type="PROSITE-ProRule" id="PRU01237"/>
    </source>
</evidence>
<evidence type="ECO:0000256" key="8">
    <source>
        <dbReference type="SAM" id="MobiDB-lite"/>
    </source>
</evidence>
<keyword id="KW-0067">ATP-binding</keyword>
<keyword id="KW-0106">Calcium</keyword>
<keyword id="KW-0347">Helicase</keyword>
<keyword id="KW-1035">Host cytoplasm</keyword>
<keyword id="KW-1043">Host membrane</keyword>
<keyword id="KW-0378">Hydrolase</keyword>
<keyword id="KW-0472">Membrane</keyword>
<keyword id="KW-0479">Metal-binding</keyword>
<keyword id="KW-0547">Nucleotide-binding</keyword>
<keyword id="KW-0548">Nucleotidyltransferase</keyword>
<keyword id="KW-0645">Protease</keyword>
<keyword id="KW-0696">RNA-directed RNA polymerase</keyword>
<keyword id="KW-0788">Thiol protease</keyword>
<keyword id="KW-0808">Transferase</keyword>
<keyword id="KW-0693">Viral RNA replication</keyword>
<keyword id="KW-0862">Zinc</keyword>
<protein>
    <recommendedName>
        <fullName>Non-structural polyprotein p200</fullName>
        <shortName>p200</shortName>
    </recommendedName>
    <component>
        <recommendedName>
            <fullName>Protease/methyltransferase p150</fullName>
            <shortName>p150</shortName>
            <ecNumber>3.4.22.-</ecNumber>
        </recommendedName>
    </component>
    <component>
        <recommendedName>
            <fullName>RNA-directed RNA polymerase p90</fullName>
            <shortName>p90</shortName>
            <ecNumber evidence="4">2.7.7.48</ecNumber>
            <ecNumber>3.6.1.15</ecNumber>
            <ecNumber>3.6.4.13</ecNumber>
        </recommendedName>
    </component>
</protein>
<proteinExistence type="inferred from homology"/>
<reference key="1">
    <citation type="journal article" date="2001" name="Vaccine">
        <title>Mutation of rubella virus vaccine TO-336 strain occurred in the attenuation process of wild progenitor virus.</title>
        <authorList>
            <person name="Kakizawa J."/>
            <person name="Nitta Y."/>
            <person name="Yamashita T."/>
            <person name="Ushijima H."/>
            <person name="Katow S."/>
        </authorList>
    </citation>
    <scope>NUCLEOTIDE SEQUENCE [GENOMIC RNA]</scope>
</reference>
<name>POLN_RUBVO</name>